<gene>
    <name type="primary">Cert1</name>
    <name type="synonym">Cert</name>
    <name type="synonym">Col4a3bp</name>
    <name type="synonym">Stard11</name>
</gene>
<dbReference type="EMBL" id="AF232932">
    <property type="protein sequence ID" value="AAG42048.1"/>
    <property type="molecule type" value="mRNA"/>
</dbReference>
<dbReference type="EMBL" id="AF232934">
    <property type="protein sequence ID" value="AAG42050.1"/>
    <property type="molecule type" value="mRNA"/>
</dbReference>
<dbReference type="EMBL" id="AK012989">
    <property type="protein sequence ID" value="BAB28581.1"/>
    <property type="molecule type" value="mRNA"/>
</dbReference>
<dbReference type="EMBL" id="AK018103">
    <property type="protein sequence ID" value="BAB31070.1"/>
    <property type="molecule type" value="mRNA"/>
</dbReference>
<dbReference type="EMBL" id="AK038061">
    <property type="protein sequence ID" value="BAC29927.1"/>
    <property type="molecule type" value="mRNA"/>
</dbReference>
<dbReference type="EMBL" id="AK047100">
    <property type="protein sequence ID" value="BAC32962.1"/>
    <property type="molecule type" value="mRNA"/>
</dbReference>
<dbReference type="EMBL" id="AK080958">
    <property type="protein sequence ID" value="BAC38095.2"/>
    <property type="molecule type" value="mRNA"/>
</dbReference>
<dbReference type="EMBL" id="AK163624">
    <property type="protein sequence ID" value="BAE37427.1"/>
    <property type="molecule type" value="mRNA"/>
</dbReference>
<dbReference type="EMBL" id="BC016197">
    <property type="protein sequence ID" value="AAH16197.1"/>
    <property type="status" value="ALT_SEQ"/>
    <property type="molecule type" value="mRNA"/>
</dbReference>
<dbReference type="CCDS" id="CCDS26705.1">
    <molecule id="Q9EQG9-1"/>
</dbReference>
<dbReference type="CCDS" id="CCDS49335.1">
    <molecule id="Q9EQG9-2"/>
</dbReference>
<dbReference type="RefSeq" id="NP_001157694.1">
    <molecule id="Q9EQG9-2"/>
    <property type="nucleotide sequence ID" value="NM_001164222.1"/>
</dbReference>
<dbReference type="RefSeq" id="NP_075909.1">
    <molecule id="Q9EQG9-1"/>
    <property type="nucleotide sequence ID" value="NM_023420.2"/>
</dbReference>
<dbReference type="SMR" id="Q9EQG9"/>
<dbReference type="BioGRID" id="212600">
    <property type="interactions" value="5"/>
</dbReference>
<dbReference type="FunCoup" id="Q9EQG9">
    <property type="interactions" value="5730"/>
</dbReference>
<dbReference type="IntAct" id="Q9EQG9">
    <property type="interactions" value="1"/>
</dbReference>
<dbReference type="STRING" id="10090.ENSMUSP00000076856"/>
<dbReference type="iPTMnet" id="Q9EQG9"/>
<dbReference type="PhosphoSitePlus" id="Q9EQG9"/>
<dbReference type="jPOST" id="Q9EQG9"/>
<dbReference type="PaxDb" id="10090-ENSMUSP00000076856"/>
<dbReference type="PeptideAtlas" id="Q9EQG9"/>
<dbReference type="ProteomicsDB" id="273856">
    <molecule id="Q9EQG9-1"/>
</dbReference>
<dbReference type="ProteomicsDB" id="273857">
    <molecule id="Q9EQG9-2"/>
</dbReference>
<dbReference type="ProteomicsDB" id="273858">
    <molecule id="Q9EQG9-3"/>
</dbReference>
<dbReference type="Pumba" id="Q9EQG9"/>
<dbReference type="Antibodypedia" id="24390">
    <property type="antibodies" value="364 antibodies from 34 providers"/>
</dbReference>
<dbReference type="DNASU" id="68018"/>
<dbReference type="Ensembl" id="ENSMUST00000077672.12">
    <molecule id="Q9EQG9-1"/>
    <property type="protein sequence ID" value="ENSMUSP00000076856.5"/>
    <property type="gene ID" value="ENSMUSG00000021669.17"/>
</dbReference>
<dbReference type="Ensembl" id="ENSMUST00000109444.3">
    <molecule id="Q9EQG9-2"/>
    <property type="protein sequence ID" value="ENSMUSP00000105070.3"/>
    <property type="gene ID" value="ENSMUSG00000021669.17"/>
</dbReference>
<dbReference type="GeneID" id="68018"/>
<dbReference type="KEGG" id="mmu:68018"/>
<dbReference type="UCSC" id="uc007rni.2">
    <molecule id="Q9EQG9-3"/>
    <property type="organism name" value="mouse"/>
</dbReference>
<dbReference type="UCSC" id="uc007rnk.2">
    <molecule id="Q9EQG9-1"/>
    <property type="organism name" value="mouse"/>
</dbReference>
<dbReference type="UCSC" id="uc007rnl.2">
    <molecule id="Q9EQG9-2"/>
    <property type="organism name" value="mouse"/>
</dbReference>
<dbReference type="AGR" id="MGI:1915268"/>
<dbReference type="CTD" id="10087"/>
<dbReference type="MGI" id="MGI:1915268">
    <property type="gene designation" value="Cert1"/>
</dbReference>
<dbReference type="VEuPathDB" id="HostDB:ENSMUSG00000021669"/>
<dbReference type="eggNOG" id="KOG1739">
    <property type="taxonomic scope" value="Eukaryota"/>
</dbReference>
<dbReference type="GeneTree" id="ENSGT00940000155123"/>
<dbReference type="HOGENOM" id="CLU_017289_0_0_1"/>
<dbReference type="InParanoid" id="Q9EQG9"/>
<dbReference type="OMA" id="LETCHRI"/>
<dbReference type="OrthoDB" id="2344588at2759"/>
<dbReference type="PhylomeDB" id="Q9EQG9"/>
<dbReference type="TreeFam" id="TF106160"/>
<dbReference type="BRENDA" id="2.7.11.9">
    <property type="organism ID" value="3474"/>
</dbReference>
<dbReference type="BioGRID-ORCS" id="68018">
    <property type="hits" value="5 hits in 80 CRISPR screens"/>
</dbReference>
<dbReference type="ChiTaRS" id="Col4a3bp">
    <property type="organism name" value="mouse"/>
</dbReference>
<dbReference type="PRO" id="PR:Q9EQG9"/>
<dbReference type="Proteomes" id="UP000000589">
    <property type="component" value="Chromosome 13"/>
</dbReference>
<dbReference type="RNAct" id="Q9EQG9">
    <property type="molecule type" value="protein"/>
</dbReference>
<dbReference type="Bgee" id="ENSMUSG00000021669">
    <property type="expression patterns" value="Expressed in substantia nigra and 237 other cell types or tissues"/>
</dbReference>
<dbReference type="GO" id="GO:0005829">
    <property type="term" value="C:cytosol"/>
    <property type="evidence" value="ECO:0000314"/>
    <property type="project" value="MGI"/>
</dbReference>
<dbReference type="GO" id="GO:0005783">
    <property type="term" value="C:endoplasmic reticulum"/>
    <property type="evidence" value="ECO:0007669"/>
    <property type="project" value="UniProtKB-SubCell"/>
</dbReference>
<dbReference type="GO" id="GO:0005794">
    <property type="term" value="C:Golgi apparatus"/>
    <property type="evidence" value="ECO:0000250"/>
    <property type="project" value="UniProtKB"/>
</dbReference>
<dbReference type="GO" id="GO:0016020">
    <property type="term" value="C:membrane"/>
    <property type="evidence" value="ECO:0007669"/>
    <property type="project" value="GOC"/>
</dbReference>
<dbReference type="GO" id="GO:0005739">
    <property type="term" value="C:mitochondrion"/>
    <property type="evidence" value="ECO:0000314"/>
    <property type="project" value="MGI"/>
</dbReference>
<dbReference type="GO" id="GO:0005654">
    <property type="term" value="C:nucleoplasm"/>
    <property type="evidence" value="ECO:0007669"/>
    <property type="project" value="Ensembl"/>
</dbReference>
<dbReference type="GO" id="GO:0048471">
    <property type="term" value="C:perinuclear region of cytoplasm"/>
    <property type="evidence" value="ECO:0007669"/>
    <property type="project" value="Ensembl"/>
</dbReference>
<dbReference type="GO" id="GO:0097001">
    <property type="term" value="F:ceramide binding"/>
    <property type="evidence" value="ECO:0000250"/>
    <property type="project" value="UniProtKB"/>
</dbReference>
<dbReference type="GO" id="GO:0120017">
    <property type="term" value="F:ceramide transfer activity"/>
    <property type="evidence" value="ECO:0000250"/>
    <property type="project" value="UniProtKB"/>
</dbReference>
<dbReference type="GO" id="GO:0016301">
    <property type="term" value="F:kinase activity"/>
    <property type="evidence" value="ECO:0000314"/>
    <property type="project" value="MGI"/>
</dbReference>
<dbReference type="GO" id="GO:0000902">
    <property type="term" value="P:cell morphogenesis"/>
    <property type="evidence" value="ECO:0000315"/>
    <property type="project" value="MGI"/>
</dbReference>
<dbReference type="GO" id="GO:0008283">
    <property type="term" value="P:cell population proliferation"/>
    <property type="evidence" value="ECO:0000315"/>
    <property type="project" value="MGI"/>
</dbReference>
<dbReference type="GO" id="GO:0006672">
    <property type="term" value="P:ceramide metabolic process"/>
    <property type="evidence" value="ECO:0000315"/>
    <property type="project" value="MGI"/>
</dbReference>
<dbReference type="GO" id="GO:0007029">
    <property type="term" value="P:endoplasmic reticulum organization"/>
    <property type="evidence" value="ECO:0000315"/>
    <property type="project" value="MGI"/>
</dbReference>
<dbReference type="GO" id="GO:0035621">
    <property type="term" value="P:ER to Golgi ceramide transport"/>
    <property type="evidence" value="ECO:0000315"/>
    <property type="project" value="MGI"/>
</dbReference>
<dbReference type="GO" id="GO:0003007">
    <property type="term" value="P:heart morphogenesis"/>
    <property type="evidence" value="ECO:0000315"/>
    <property type="project" value="MGI"/>
</dbReference>
<dbReference type="GO" id="GO:0001701">
    <property type="term" value="P:in utero embryonic development"/>
    <property type="evidence" value="ECO:0000315"/>
    <property type="project" value="MGI"/>
</dbReference>
<dbReference type="GO" id="GO:0120012">
    <property type="term" value="P:intermembrane sphingolipid transfer"/>
    <property type="evidence" value="ECO:0007669"/>
    <property type="project" value="Ensembl"/>
</dbReference>
<dbReference type="GO" id="GO:0055088">
    <property type="term" value="P:lipid homeostasis"/>
    <property type="evidence" value="ECO:0000315"/>
    <property type="project" value="MGI"/>
</dbReference>
<dbReference type="GO" id="GO:0007005">
    <property type="term" value="P:mitochondrion organization"/>
    <property type="evidence" value="ECO:0000315"/>
    <property type="project" value="MGI"/>
</dbReference>
<dbReference type="GO" id="GO:0006936">
    <property type="term" value="P:muscle contraction"/>
    <property type="evidence" value="ECO:0000315"/>
    <property type="project" value="MGI"/>
</dbReference>
<dbReference type="GO" id="GO:0034976">
    <property type="term" value="P:response to endoplasmic reticulum stress"/>
    <property type="evidence" value="ECO:0000315"/>
    <property type="project" value="MGI"/>
</dbReference>
<dbReference type="GO" id="GO:0007165">
    <property type="term" value="P:signal transduction"/>
    <property type="evidence" value="ECO:0000315"/>
    <property type="project" value="MGI"/>
</dbReference>
<dbReference type="CDD" id="cd13283">
    <property type="entry name" value="PH_GPBP"/>
    <property type="match status" value="1"/>
</dbReference>
<dbReference type="CDD" id="cd08872">
    <property type="entry name" value="START_STARD11-like"/>
    <property type="match status" value="1"/>
</dbReference>
<dbReference type="FunFam" id="2.30.29.30:FF:000104">
    <property type="entry name" value="collagen type IV alpha-3-binding protein-like isoform X2"/>
    <property type="match status" value="1"/>
</dbReference>
<dbReference type="FunFam" id="3.30.530.20:FF:000003">
    <property type="entry name" value="Collagen type IV alpha-3-binding protein-like protein"/>
    <property type="match status" value="1"/>
</dbReference>
<dbReference type="Gene3D" id="3.30.530.20">
    <property type="match status" value="1"/>
</dbReference>
<dbReference type="Gene3D" id="2.30.29.30">
    <property type="entry name" value="Pleckstrin-homology domain (PH domain)/Phosphotyrosine-binding domain (PTB)"/>
    <property type="match status" value="1"/>
</dbReference>
<dbReference type="InterPro" id="IPR011993">
    <property type="entry name" value="PH-like_dom_sf"/>
</dbReference>
<dbReference type="InterPro" id="IPR001849">
    <property type="entry name" value="PH_domain"/>
</dbReference>
<dbReference type="InterPro" id="IPR041952">
    <property type="entry name" value="STARD11_START"/>
</dbReference>
<dbReference type="InterPro" id="IPR023393">
    <property type="entry name" value="START-like_dom_sf"/>
</dbReference>
<dbReference type="InterPro" id="IPR002913">
    <property type="entry name" value="START_lipid-bd_dom"/>
</dbReference>
<dbReference type="InterPro" id="IPR051213">
    <property type="entry name" value="START_lipid_transfer"/>
</dbReference>
<dbReference type="PANTHER" id="PTHR19308:SF53">
    <property type="entry name" value="CERAMIDE TRANSFER PROTEIN"/>
    <property type="match status" value="1"/>
</dbReference>
<dbReference type="PANTHER" id="PTHR19308">
    <property type="entry name" value="PHOSPHATIDYLCHOLINE TRANSFER PROTEIN"/>
    <property type="match status" value="1"/>
</dbReference>
<dbReference type="Pfam" id="PF00169">
    <property type="entry name" value="PH"/>
    <property type="match status" value="1"/>
</dbReference>
<dbReference type="Pfam" id="PF01852">
    <property type="entry name" value="START"/>
    <property type="match status" value="1"/>
</dbReference>
<dbReference type="SMART" id="SM00233">
    <property type="entry name" value="PH"/>
    <property type="match status" value="1"/>
</dbReference>
<dbReference type="SMART" id="SM00234">
    <property type="entry name" value="START"/>
    <property type="match status" value="1"/>
</dbReference>
<dbReference type="SUPFAM" id="SSF55961">
    <property type="entry name" value="Bet v1-like"/>
    <property type="match status" value="1"/>
</dbReference>
<dbReference type="SUPFAM" id="SSF50729">
    <property type="entry name" value="PH domain-like"/>
    <property type="match status" value="1"/>
</dbReference>
<dbReference type="PROSITE" id="PS50003">
    <property type="entry name" value="PH_DOMAIN"/>
    <property type="match status" value="1"/>
</dbReference>
<dbReference type="PROSITE" id="PS50848">
    <property type="entry name" value="START"/>
    <property type="match status" value="1"/>
</dbReference>
<comment type="function">
    <text evidence="2">Shelters ceramides and diacylglycerol lipids inside its START domain and mediates the intracellular trafficking of ceramides and diacylglycerol lipids in a non-vesicular manner.</text>
</comment>
<comment type="catalytic activity">
    <reaction evidence="1">
        <text>N-hexadecanoylsphing-4-enine(in) = N-hexadecanoylsphing-4-enine(out)</text>
        <dbReference type="Rhea" id="RHEA:45720"/>
        <dbReference type="ChEBI" id="CHEBI:72959"/>
    </reaction>
</comment>
<comment type="subunit">
    <text evidence="2">Interacts with VAPA and VAPB. Interaction with VAPB is less efficient than with VAPA. Interacts (via FFAT motif) with MOSPD2 (via MSP domain).</text>
</comment>
<comment type="subcellular location">
    <subcellularLocation>
        <location evidence="2">Cytoplasm</location>
    </subcellularLocation>
    <subcellularLocation>
        <location evidence="2">Golgi apparatus</location>
    </subcellularLocation>
    <subcellularLocation>
        <location evidence="2">Endoplasmic reticulum</location>
    </subcellularLocation>
    <text evidence="2">Preferentially localized to the Golgi apparatus.</text>
</comment>
<comment type="alternative products">
    <event type="alternative splicing"/>
    <isoform>
        <id>Q9EQG9-1</id>
        <name>1</name>
        <sequence type="displayed"/>
    </isoform>
    <isoform>
        <id>Q9EQG9-2</id>
        <name>2</name>
        <name>Delta26</name>
        <name>GPBPD26</name>
        <name evidence="2">CERT</name>
        <sequence type="described" ref="VSP_006277"/>
    </isoform>
    <isoform>
        <id>Q9EQG9-3</id>
        <name>3</name>
        <sequence type="described" ref="VSP_028735 VSP_028736"/>
    </isoform>
</comment>
<comment type="domain">
    <text evidence="2">The START domain recognizes ceramides and diacylglycerol lipids, interacts with membranes, and mediates the intermembrane transfer of ceramides and diacylglycerol lipids.</text>
</comment>
<comment type="domain">
    <text evidence="2">The PH domain targets the Golgi apparatus.</text>
</comment>
<comment type="domain">
    <text evidence="2">The FFAT motif is required for interaction with VAPA, VAPB and MOSPD2.</text>
</comment>
<comment type="PTM">
    <text evidence="2">Phosphorylation on Ser-132 decreases the affinity toward phosphatidylinositol 4-phosphate at Golgi membranes and reduces ceramide transfer activity. Inactivated by hyperphosphorylation of serine residues by CSNK1G2/CK1 that triggers dissociation from the Golgi complex, thus down-regulating ER-to-Golgi transport of ceramide and sphingomyelin synthesis.</text>
</comment>
<comment type="miscellaneous">
    <molecule>Isoform 3</molecule>
    <text evidence="9">May be due to intron retention.</text>
</comment>
<comment type="sequence caution" evidence="9">
    <conflict type="miscellaneous discrepancy">
        <sequence resource="EMBL-CDS" id="AAH16197"/>
    </conflict>
    <text>Contaminating sequence. Sequence of unknown origin in the N-terminal part.</text>
</comment>
<sequence length="624" mass="71111">MSDNQSWNSSGSEEDPETESGPPVERCGVLSKWTNYIHGWQDRWVVLKNNTLSYYKSEDETEYGCRGSICLSKAVITPHDFDECRFDISVNDSVWYLRAQDPEHRQQWVDAIEQHKTESGYGSESSLRRHGSMVSLVSGASGYSATSTSSFKKGHSLREKLAEMETFRDILCRQVDTLQKYFDVCADAVSKDELQRDKVVEDDEDDFPTTRSDGDFLHNTNGNKEKLFPHVTPKGINGIDFKGEAITFKATTAGILATLSHCIELMVKREESWQKRHDREVEKRRRVEEAYKNVMEELKKKPRFGGPDYEEGPNSLINEEEFFDAVEAALDRQDKIEEQSQSEKVRLHWPTSLPSGDTFSSVGTHRFVQKPYSRSSSMSSIDLVSASDDVHRFSSQVEEMVQNHMNYSLQDVGGDANWQLVVEEGEMKVYRREVEENGIVLDPLKATHAVKGVTGHEVCNYFWNVDVRNDWETTIENFHVVETLADNAIIVYQTHKRVWPASQRDVLYLSAIRKIPALTENDPETWIVCNFSVDHDSAPLNNRCVRAKINIAMICQTLVSPPEGDQEISRDNILCKITYVANVNPGGWAPASVLRAVAKREYPKFLKRFTSYVQEKTAGKPILF</sequence>
<name>CERT_MOUSE</name>
<feature type="chain" id="PRO_0000220666" description="Ceramide transfer protein">
    <location>
        <begin position="1"/>
        <end position="624"/>
    </location>
</feature>
<feature type="domain" description="PH" evidence="4">
    <location>
        <begin position="23"/>
        <end position="117"/>
    </location>
</feature>
<feature type="domain" description="START" evidence="5">
    <location>
        <begin position="389"/>
        <end position="618"/>
    </location>
</feature>
<feature type="region of interest" description="Disordered" evidence="6">
    <location>
        <begin position="1"/>
        <end position="24"/>
    </location>
</feature>
<feature type="region of interest" description="Disordered" evidence="6">
    <location>
        <begin position="202"/>
        <end position="221"/>
    </location>
</feature>
<feature type="coiled-coil region" evidence="3">
    <location>
        <begin position="263"/>
        <end position="303"/>
    </location>
</feature>
<feature type="short sequence motif" description="FFAT" evidence="2">
    <location>
        <begin position="321"/>
        <end position="327"/>
    </location>
</feature>
<feature type="compositionally biased region" description="Polar residues" evidence="6">
    <location>
        <begin position="1"/>
        <end position="11"/>
    </location>
</feature>
<feature type="binding site" evidence="2">
    <location>
        <position position="472"/>
    </location>
    <ligand>
        <name>an N-acylsphing-4-enine</name>
        <dbReference type="ChEBI" id="CHEBI:52639"/>
    </ligand>
</feature>
<feature type="binding site" evidence="2">
    <location>
        <position position="493"/>
    </location>
    <ligand>
        <name>an N-acylsphing-4-enine</name>
        <dbReference type="ChEBI" id="CHEBI:52639"/>
    </ligand>
</feature>
<feature type="binding site" evidence="2">
    <location>
        <position position="530"/>
    </location>
    <ligand>
        <name>an N-acylsphing-4-enine</name>
        <dbReference type="ChEBI" id="CHEBI:52639"/>
    </ligand>
</feature>
<feature type="binding site" evidence="2">
    <location>
        <position position="579"/>
    </location>
    <ligand>
        <name>an N-acylsphing-4-enine</name>
        <dbReference type="ChEBI" id="CHEBI:52639"/>
    </ligand>
</feature>
<feature type="modified residue" description="Phosphoserine" evidence="2">
    <location>
        <position position="126"/>
    </location>
</feature>
<feature type="modified residue" description="Phosphoserine" evidence="11">
    <location>
        <position position="132"/>
    </location>
</feature>
<feature type="modified residue" description="Phosphoserine" evidence="11">
    <location>
        <position position="135"/>
    </location>
</feature>
<feature type="modified residue" description="Phosphoserine" evidence="2">
    <location>
        <position position="315"/>
    </location>
</feature>
<feature type="modified residue" description="Phosphotyrosine" evidence="2">
    <location>
        <position position="372"/>
    </location>
</feature>
<feature type="modified residue" description="Phosphoserine" evidence="2">
    <location>
        <position position="373"/>
    </location>
</feature>
<feature type="modified residue" description="Phosphoserine" evidence="10 11">
    <location>
        <position position="377"/>
    </location>
</feature>
<feature type="modified residue" description="Phosphoserine" evidence="11">
    <location>
        <position position="380"/>
    </location>
</feature>
<feature type="splice variant" id="VSP_028735" description="In isoform 3." evidence="8">
    <original>EGP</original>
    <variation>VWT</variation>
    <location>
        <begin position="311"/>
        <end position="313"/>
    </location>
</feature>
<feature type="splice variant" id="VSP_028736" description="In isoform 3." evidence="8">
    <location>
        <begin position="314"/>
        <end position="624"/>
    </location>
</feature>
<feature type="splice variant" id="VSP_006277" description="In isoform 2." evidence="7 8">
    <location>
        <begin position="371"/>
        <end position="396"/>
    </location>
</feature>
<feature type="sequence conflict" description="In Ref. 2; BAB31070." evidence="9" ref="2">
    <original>W</original>
    <variation>S</variation>
    <location>
        <position position="526"/>
    </location>
</feature>
<feature type="sequence conflict" description="In Ref. 2; BAB31070." evidence="9" ref="2">
    <original>S</original>
    <variation>P</variation>
    <location>
        <position position="592"/>
    </location>
</feature>
<organism>
    <name type="scientific">Mus musculus</name>
    <name type="common">Mouse</name>
    <dbReference type="NCBI Taxonomy" id="10090"/>
    <lineage>
        <taxon>Eukaryota</taxon>
        <taxon>Metazoa</taxon>
        <taxon>Chordata</taxon>
        <taxon>Craniata</taxon>
        <taxon>Vertebrata</taxon>
        <taxon>Euteleostomi</taxon>
        <taxon>Mammalia</taxon>
        <taxon>Eutheria</taxon>
        <taxon>Euarchontoglires</taxon>
        <taxon>Glires</taxon>
        <taxon>Rodentia</taxon>
        <taxon>Myomorpha</taxon>
        <taxon>Muroidea</taxon>
        <taxon>Muridae</taxon>
        <taxon>Murinae</taxon>
        <taxon>Mus</taxon>
        <taxon>Mus</taxon>
    </lineage>
</organism>
<evidence type="ECO:0000250" key="1">
    <source>
        <dbReference type="UniProtKB" id="Q6VVX2"/>
    </source>
</evidence>
<evidence type="ECO:0000250" key="2">
    <source>
        <dbReference type="UniProtKB" id="Q9Y5P4"/>
    </source>
</evidence>
<evidence type="ECO:0000255" key="3"/>
<evidence type="ECO:0000255" key="4">
    <source>
        <dbReference type="PROSITE-ProRule" id="PRU00145"/>
    </source>
</evidence>
<evidence type="ECO:0000255" key="5">
    <source>
        <dbReference type="PROSITE-ProRule" id="PRU00197"/>
    </source>
</evidence>
<evidence type="ECO:0000256" key="6">
    <source>
        <dbReference type="SAM" id="MobiDB-lite"/>
    </source>
</evidence>
<evidence type="ECO:0000303" key="7">
    <source>
    </source>
</evidence>
<evidence type="ECO:0000303" key="8">
    <source>
    </source>
</evidence>
<evidence type="ECO:0000305" key="9"/>
<evidence type="ECO:0007744" key="10">
    <source>
    </source>
</evidence>
<evidence type="ECO:0007744" key="11">
    <source>
    </source>
</evidence>
<reference key="1">
    <citation type="journal article" date="2000" name="J. Biol. Chem.">
        <title>Goodpasture antigen-binding protein, the kinase that phosphorylates the Goodpasture antigen, is an alternatively spliced variant implicated in autoimmune pathogenesis.</title>
        <authorList>
            <person name="Raya A."/>
            <person name="Revert-Ros F."/>
            <person name="Martinez-Martinez P."/>
            <person name="Navarro S."/>
            <person name="Rosello E."/>
            <person name="Vieites B."/>
            <person name="Granero F."/>
            <person name="Forteza J."/>
            <person name="Saus J."/>
        </authorList>
    </citation>
    <scope>NUCLEOTIDE SEQUENCE [MRNA] (ISOFORMS 1 AND 2)</scope>
</reference>
<reference key="2">
    <citation type="journal article" date="2005" name="Science">
        <title>The transcriptional landscape of the mammalian genome.</title>
        <authorList>
            <person name="Carninci P."/>
            <person name="Kasukawa T."/>
            <person name="Katayama S."/>
            <person name="Gough J."/>
            <person name="Frith M.C."/>
            <person name="Maeda N."/>
            <person name="Oyama R."/>
            <person name="Ravasi T."/>
            <person name="Lenhard B."/>
            <person name="Wells C."/>
            <person name="Kodzius R."/>
            <person name="Shimokawa K."/>
            <person name="Bajic V.B."/>
            <person name="Brenner S.E."/>
            <person name="Batalov S."/>
            <person name="Forrest A.R."/>
            <person name="Zavolan M."/>
            <person name="Davis M.J."/>
            <person name="Wilming L.G."/>
            <person name="Aidinis V."/>
            <person name="Allen J.E."/>
            <person name="Ambesi-Impiombato A."/>
            <person name="Apweiler R."/>
            <person name="Aturaliya R.N."/>
            <person name="Bailey T.L."/>
            <person name="Bansal M."/>
            <person name="Baxter L."/>
            <person name="Beisel K.W."/>
            <person name="Bersano T."/>
            <person name="Bono H."/>
            <person name="Chalk A.M."/>
            <person name="Chiu K.P."/>
            <person name="Choudhary V."/>
            <person name="Christoffels A."/>
            <person name="Clutterbuck D.R."/>
            <person name="Crowe M.L."/>
            <person name="Dalla E."/>
            <person name="Dalrymple B.P."/>
            <person name="de Bono B."/>
            <person name="Della Gatta G."/>
            <person name="di Bernardo D."/>
            <person name="Down T."/>
            <person name="Engstrom P."/>
            <person name="Fagiolini M."/>
            <person name="Faulkner G."/>
            <person name="Fletcher C.F."/>
            <person name="Fukushima T."/>
            <person name="Furuno M."/>
            <person name="Futaki S."/>
            <person name="Gariboldi M."/>
            <person name="Georgii-Hemming P."/>
            <person name="Gingeras T.R."/>
            <person name="Gojobori T."/>
            <person name="Green R.E."/>
            <person name="Gustincich S."/>
            <person name="Harbers M."/>
            <person name="Hayashi Y."/>
            <person name="Hensch T.K."/>
            <person name="Hirokawa N."/>
            <person name="Hill D."/>
            <person name="Huminiecki L."/>
            <person name="Iacono M."/>
            <person name="Ikeo K."/>
            <person name="Iwama A."/>
            <person name="Ishikawa T."/>
            <person name="Jakt M."/>
            <person name="Kanapin A."/>
            <person name="Katoh M."/>
            <person name="Kawasawa Y."/>
            <person name="Kelso J."/>
            <person name="Kitamura H."/>
            <person name="Kitano H."/>
            <person name="Kollias G."/>
            <person name="Krishnan S.P."/>
            <person name="Kruger A."/>
            <person name="Kummerfeld S.K."/>
            <person name="Kurochkin I.V."/>
            <person name="Lareau L.F."/>
            <person name="Lazarevic D."/>
            <person name="Lipovich L."/>
            <person name="Liu J."/>
            <person name="Liuni S."/>
            <person name="McWilliam S."/>
            <person name="Madan Babu M."/>
            <person name="Madera M."/>
            <person name="Marchionni L."/>
            <person name="Matsuda H."/>
            <person name="Matsuzawa S."/>
            <person name="Miki H."/>
            <person name="Mignone F."/>
            <person name="Miyake S."/>
            <person name="Morris K."/>
            <person name="Mottagui-Tabar S."/>
            <person name="Mulder N."/>
            <person name="Nakano N."/>
            <person name="Nakauchi H."/>
            <person name="Ng P."/>
            <person name="Nilsson R."/>
            <person name="Nishiguchi S."/>
            <person name="Nishikawa S."/>
            <person name="Nori F."/>
            <person name="Ohara O."/>
            <person name="Okazaki Y."/>
            <person name="Orlando V."/>
            <person name="Pang K.C."/>
            <person name="Pavan W.J."/>
            <person name="Pavesi G."/>
            <person name="Pesole G."/>
            <person name="Petrovsky N."/>
            <person name="Piazza S."/>
            <person name="Reed J."/>
            <person name="Reid J.F."/>
            <person name="Ring B.Z."/>
            <person name="Ringwald M."/>
            <person name="Rost B."/>
            <person name="Ruan Y."/>
            <person name="Salzberg S.L."/>
            <person name="Sandelin A."/>
            <person name="Schneider C."/>
            <person name="Schoenbach C."/>
            <person name="Sekiguchi K."/>
            <person name="Semple C.A."/>
            <person name="Seno S."/>
            <person name="Sessa L."/>
            <person name="Sheng Y."/>
            <person name="Shibata Y."/>
            <person name="Shimada H."/>
            <person name="Shimada K."/>
            <person name="Silva D."/>
            <person name="Sinclair B."/>
            <person name="Sperling S."/>
            <person name="Stupka E."/>
            <person name="Sugiura K."/>
            <person name="Sultana R."/>
            <person name="Takenaka Y."/>
            <person name="Taki K."/>
            <person name="Tammoja K."/>
            <person name="Tan S.L."/>
            <person name="Tang S."/>
            <person name="Taylor M.S."/>
            <person name="Tegner J."/>
            <person name="Teichmann S.A."/>
            <person name="Ueda H.R."/>
            <person name="van Nimwegen E."/>
            <person name="Verardo R."/>
            <person name="Wei C.L."/>
            <person name="Yagi K."/>
            <person name="Yamanishi H."/>
            <person name="Zabarovsky E."/>
            <person name="Zhu S."/>
            <person name="Zimmer A."/>
            <person name="Hide W."/>
            <person name="Bult C."/>
            <person name="Grimmond S.M."/>
            <person name="Teasdale R.D."/>
            <person name="Liu E.T."/>
            <person name="Brusic V."/>
            <person name="Quackenbush J."/>
            <person name="Wahlestedt C."/>
            <person name="Mattick J.S."/>
            <person name="Hume D.A."/>
            <person name="Kai C."/>
            <person name="Sasaki D."/>
            <person name="Tomaru Y."/>
            <person name="Fukuda S."/>
            <person name="Kanamori-Katayama M."/>
            <person name="Suzuki M."/>
            <person name="Aoki J."/>
            <person name="Arakawa T."/>
            <person name="Iida J."/>
            <person name="Imamura K."/>
            <person name="Itoh M."/>
            <person name="Kato T."/>
            <person name="Kawaji H."/>
            <person name="Kawagashira N."/>
            <person name="Kawashima T."/>
            <person name="Kojima M."/>
            <person name="Kondo S."/>
            <person name="Konno H."/>
            <person name="Nakano K."/>
            <person name="Ninomiya N."/>
            <person name="Nishio T."/>
            <person name="Okada M."/>
            <person name="Plessy C."/>
            <person name="Shibata K."/>
            <person name="Shiraki T."/>
            <person name="Suzuki S."/>
            <person name="Tagami M."/>
            <person name="Waki K."/>
            <person name="Watahiki A."/>
            <person name="Okamura-Oho Y."/>
            <person name="Suzuki H."/>
            <person name="Kawai J."/>
            <person name="Hayashizaki Y."/>
        </authorList>
    </citation>
    <scope>NUCLEOTIDE SEQUENCE [LARGE SCALE MRNA] (ISOFORMS 2 AND 3)</scope>
    <scope>NUCLEOTIDE SEQUENCE [LARGE SCALE MRNA] OF 1-425 (ISOFORM 1)</scope>
    <source>
        <strain>C57BL/6J</strain>
        <tissue>Adipose tissue</tissue>
        <tissue>Cerebellum</tissue>
        <tissue>Embryo</tissue>
        <tissue>Medulla oblongata</tissue>
        <tissue>Thymus</tissue>
    </source>
</reference>
<reference key="3">
    <citation type="journal article" date="2004" name="Genome Res.">
        <title>The status, quality, and expansion of the NIH full-length cDNA project: the Mammalian Gene Collection (MGC).</title>
        <authorList>
            <consortium name="The MGC Project Team"/>
        </authorList>
    </citation>
    <scope>NUCLEOTIDE SEQUENCE [LARGE SCALE MRNA] OF 1-414 (ISOFORM 1)</scope>
    <source>
        <strain>C57BL/6J</strain>
        <tissue>Retina</tissue>
    </source>
</reference>
<reference key="4">
    <citation type="journal article" date="2007" name="Proc. Natl. Acad. Sci. U.S.A.">
        <title>Large-scale phosphorylation analysis of mouse liver.</title>
        <authorList>
            <person name="Villen J."/>
            <person name="Beausoleil S.A."/>
            <person name="Gerber S.A."/>
            <person name="Gygi S.P."/>
        </authorList>
    </citation>
    <scope>PHOSPHORYLATION [LARGE SCALE ANALYSIS] AT SER-377</scope>
    <scope>IDENTIFICATION BY MASS SPECTROMETRY [LARGE SCALE ANALYSIS]</scope>
    <source>
        <tissue>Liver</tissue>
    </source>
</reference>
<reference key="5">
    <citation type="journal article" date="2010" name="Cell">
        <title>A tissue-specific atlas of mouse protein phosphorylation and expression.</title>
        <authorList>
            <person name="Huttlin E.L."/>
            <person name="Jedrychowski M.P."/>
            <person name="Elias J.E."/>
            <person name="Goswami T."/>
            <person name="Rad R."/>
            <person name="Beausoleil S.A."/>
            <person name="Villen J."/>
            <person name="Haas W."/>
            <person name="Sowa M.E."/>
            <person name="Gygi S.P."/>
        </authorList>
    </citation>
    <scope>PHOSPHORYLATION [LARGE SCALE ANALYSIS] AT SER-132; SER-135; SER-377 AND SER-380</scope>
    <scope>IDENTIFICATION BY MASS SPECTROMETRY [LARGE SCALE ANALYSIS]</scope>
    <source>
        <tissue>Brain</tissue>
        <tissue>Brown adipose tissue</tissue>
        <tissue>Heart</tissue>
        <tissue>Kidney</tissue>
        <tissue>Liver</tissue>
        <tissue>Lung</tissue>
        <tissue>Pancreas</tissue>
        <tissue>Spleen</tissue>
        <tissue>Testis</tissue>
    </source>
</reference>
<protein>
    <recommendedName>
        <fullName>Ceramide transfer protein</fullName>
        <shortName>CERT</shortName>
    </recommendedName>
    <alternativeName>
        <fullName>Collagen type IV alpha-3-binding protein</fullName>
    </alternativeName>
    <alternativeName>
        <fullName>Goodpasture antigen-binding protein</fullName>
        <shortName>GPBP</shortName>
    </alternativeName>
    <alternativeName>
        <fullName>START domain-containing protein 11</fullName>
        <shortName>StARD11</shortName>
    </alternativeName>
    <alternativeName>
        <fullName>StAR-related lipid transfer protein 11</fullName>
    </alternativeName>
</protein>
<proteinExistence type="evidence at protein level"/>
<accession>Q9EQG9</accession>
<accession>Q3TQF6</accession>
<accession>Q8BNN8</accession>
<accession>Q8C8H3</accession>
<accession>Q8CAR3</accession>
<accession>Q91WB1</accession>
<accession>Q9CU52</accession>
<accession>Q9EQG8</accession>
<keyword id="KW-0025">Alternative splicing</keyword>
<keyword id="KW-0175">Coiled coil</keyword>
<keyword id="KW-0963">Cytoplasm</keyword>
<keyword id="KW-0256">Endoplasmic reticulum</keyword>
<keyword id="KW-0333">Golgi apparatus</keyword>
<keyword id="KW-0445">Lipid transport</keyword>
<keyword id="KW-0446">Lipid-binding</keyword>
<keyword id="KW-0597">Phosphoprotein</keyword>
<keyword id="KW-1185">Reference proteome</keyword>
<keyword id="KW-0813">Transport</keyword>